<dbReference type="EC" id="4.2.1.11" evidence="1"/>
<dbReference type="EMBL" id="CP000688">
    <property type="protein sequence ID" value="ABQ17153.1"/>
    <property type="molecule type" value="Genomic_DNA"/>
</dbReference>
<dbReference type="SMR" id="A5FRM5"/>
<dbReference type="KEGG" id="deb:DehaBAV1_0568"/>
<dbReference type="PATRIC" id="fig|216389.18.peg.614"/>
<dbReference type="HOGENOM" id="CLU_031223_2_1_0"/>
<dbReference type="UniPathway" id="UPA00109">
    <property type="reaction ID" value="UER00187"/>
</dbReference>
<dbReference type="GO" id="GO:0009986">
    <property type="term" value="C:cell surface"/>
    <property type="evidence" value="ECO:0007669"/>
    <property type="project" value="UniProtKB-SubCell"/>
</dbReference>
<dbReference type="GO" id="GO:0005576">
    <property type="term" value="C:extracellular region"/>
    <property type="evidence" value="ECO:0007669"/>
    <property type="project" value="UniProtKB-SubCell"/>
</dbReference>
<dbReference type="GO" id="GO:0000015">
    <property type="term" value="C:phosphopyruvate hydratase complex"/>
    <property type="evidence" value="ECO:0007669"/>
    <property type="project" value="InterPro"/>
</dbReference>
<dbReference type="GO" id="GO:0000287">
    <property type="term" value="F:magnesium ion binding"/>
    <property type="evidence" value="ECO:0007669"/>
    <property type="project" value="UniProtKB-UniRule"/>
</dbReference>
<dbReference type="GO" id="GO:0004634">
    <property type="term" value="F:phosphopyruvate hydratase activity"/>
    <property type="evidence" value="ECO:0007669"/>
    <property type="project" value="UniProtKB-UniRule"/>
</dbReference>
<dbReference type="GO" id="GO:0006096">
    <property type="term" value="P:glycolytic process"/>
    <property type="evidence" value="ECO:0007669"/>
    <property type="project" value="UniProtKB-UniRule"/>
</dbReference>
<dbReference type="CDD" id="cd03313">
    <property type="entry name" value="enolase"/>
    <property type="match status" value="1"/>
</dbReference>
<dbReference type="FunFam" id="3.20.20.120:FF:000001">
    <property type="entry name" value="Enolase"/>
    <property type="match status" value="1"/>
</dbReference>
<dbReference type="FunFam" id="3.30.390.10:FF:000001">
    <property type="entry name" value="Enolase"/>
    <property type="match status" value="1"/>
</dbReference>
<dbReference type="Gene3D" id="3.20.20.120">
    <property type="entry name" value="Enolase-like C-terminal domain"/>
    <property type="match status" value="1"/>
</dbReference>
<dbReference type="Gene3D" id="3.30.390.10">
    <property type="entry name" value="Enolase-like, N-terminal domain"/>
    <property type="match status" value="1"/>
</dbReference>
<dbReference type="HAMAP" id="MF_00318">
    <property type="entry name" value="Enolase"/>
    <property type="match status" value="1"/>
</dbReference>
<dbReference type="InterPro" id="IPR000941">
    <property type="entry name" value="Enolase"/>
</dbReference>
<dbReference type="InterPro" id="IPR036849">
    <property type="entry name" value="Enolase-like_C_sf"/>
</dbReference>
<dbReference type="InterPro" id="IPR029017">
    <property type="entry name" value="Enolase-like_N"/>
</dbReference>
<dbReference type="InterPro" id="IPR020810">
    <property type="entry name" value="Enolase_C"/>
</dbReference>
<dbReference type="InterPro" id="IPR020809">
    <property type="entry name" value="Enolase_CS"/>
</dbReference>
<dbReference type="InterPro" id="IPR020811">
    <property type="entry name" value="Enolase_N"/>
</dbReference>
<dbReference type="NCBIfam" id="TIGR01060">
    <property type="entry name" value="eno"/>
    <property type="match status" value="1"/>
</dbReference>
<dbReference type="PANTHER" id="PTHR11902">
    <property type="entry name" value="ENOLASE"/>
    <property type="match status" value="1"/>
</dbReference>
<dbReference type="PANTHER" id="PTHR11902:SF1">
    <property type="entry name" value="ENOLASE"/>
    <property type="match status" value="1"/>
</dbReference>
<dbReference type="Pfam" id="PF00113">
    <property type="entry name" value="Enolase_C"/>
    <property type="match status" value="1"/>
</dbReference>
<dbReference type="Pfam" id="PF03952">
    <property type="entry name" value="Enolase_N"/>
    <property type="match status" value="1"/>
</dbReference>
<dbReference type="PIRSF" id="PIRSF001400">
    <property type="entry name" value="Enolase"/>
    <property type="match status" value="1"/>
</dbReference>
<dbReference type="PRINTS" id="PR00148">
    <property type="entry name" value="ENOLASE"/>
</dbReference>
<dbReference type="SFLD" id="SFLDF00002">
    <property type="entry name" value="enolase"/>
    <property type="match status" value="1"/>
</dbReference>
<dbReference type="SFLD" id="SFLDG00178">
    <property type="entry name" value="enolase"/>
    <property type="match status" value="1"/>
</dbReference>
<dbReference type="SMART" id="SM01192">
    <property type="entry name" value="Enolase_C"/>
    <property type="match status" value="1"/>
</dbReference>
<dbReference type="SMART" id="SM01193">
    <property type="entry name" value="Enolase_N"/>
    <property type="match status" value="1"/>
</dbReference>
<dbReference type="SUPFAM" id="SSF51604">
    <property type="entry name" value="Enolase C-terminal domain-like"/>
    <property type="match status" value="1"/>
</dbReference>
<dbReference type="SUPFAM" id="SSF54826">
    <property type="entry name" value="Enolase N-terminal domain-like"/>
    <property type="match status" value="1"/>
</dbReference>
<dbReference type="PROSITE" id="PS00164">
    <property type="entry name" value="ENOLASE"/>
    <property type="match status" value="1"/>
</dbReference>
<protein>
    <recommendedName>
        <fullName evidence="1">Enolase</fullName>
        <ecNumber evidence="1">4.2.1.11</ecNumber>
    </recommendedName>
    <alternativeName>
        <fullName evidence="1">2-phospho-D-glycerate hydro-lyase</fullName>
    </alternativeName>
    <alternativeName>
        <fullName evidence="1">2-phosphoglycerate dehydratase</fullName>
    </alternativeName>
</protein>
<keyword id="KW-0963">Cytoplasm</keyword>
<keyword id="KW-0324">Glycolysis</keyword>
<keyword id="KW-0456">Lyase</keyword>
<keyword id="KW-0460">Magnesium</keyword>
<keyword id="KW-0479">Metal-binding</keyword>
<keyword id="KW-0964">Secreted</keyword>
<comment type="function">
    <text evidence="1">Catalyzes the reversible conversion of 2-phosphoglycerate (2-PG) into phosphoenolpyruvate (PEP). It is essential for the degradation of carbohydrates via glycolysis.</text>
</comment>
<comment type="catalytic activity">
    <reaction evidence="1">
        <text>(2R)-2-phosphoglycerate = phosphoenolpyruvate + H2O</text>
        <dbReference type="Rhea" id="RHEA:10164"/>
        <dbReference type="ChEBI" id="CHEBI:15377"/>
        <dbReference type="ChEBI" id="CHEBI:58289"/>
        <dbReference type="ChEBI" id="CHEBI:58702"/>
        <dbReference type="EC" id="4.2.1.11"/>
    </reaction>
</comment>
<comment type="cofactor">
    <cofactor evidence="1">
        <name>Mg(2+)</name>
        <dbReference type="ChEBI" id="CHEBI:18420"/>
    </cofactor>
    <text evidence="1">Binds a second Mg(2+) ion via substrate during catalysis.</text>
</comment>
<comment type="pathway">
    <text evidence="1">Carbohydrate degradation; glycolysis; pyruvate from D-glyceraldehyde 3-phosphate: step 4/5.</text>
</comment>
<comment type="subcellular location">
    <subcellularLocation>
        <location evidence="1">Cytoplasm</location>
    </subcellularLocation>
    <subcellularLocation>
        <location evidence="1">Secreted</location>
    </subcellularLocation>
    <subcellularLocation>
        <location evidence="1">Cell surface</location>
    </subcellularLocation>
    <text evidence="1">Fractions of enolase are present in both the cytoplasm and on the cell surface.</text>
</comment>
<comment type="similarity">
    <text evidence="1">Belongs to the enolase family.</text>
</comment>
<organism>
    <name type="scientific">Dehalococcoides mccartyi (strain ATCC BAA-2100 / JCM 16839 / KCTC 5957 / BAV1)</name>
    <dbReference type="NCBI Taxonomy" id="216389"/>
    <lineage>
        <taxon>Bacteria</taxon>
        <taxon>Bacillati</taxon>
        <taxon>Chloroflexota</taxon>
        <taxon>Dehalococcoidia</taxon>
        <taxon>Dehalococcoidales</taxon>
        <taxon>Dehalococcoidaceae</taxon>
        <taxon>Dehalococcoides</taxon>
    </lineage>
</organism>
<proteinExistence type="inferred from homology"/>
<name>ENO_DEHMB</name>
<evidence type="ECO:0000255" key="1">
    <source>
        <dbReference type="HAMAP-Rule" id="MF_00318"/>
    </source>
</evidence>
<gene>
    <name evidence="1" type="primary">eno</name>
    <name type="ordered locus">DehaBAV1_0568</name>
</gene>
<reference key="1">
    <citation type="submission" date="2007-05" db="EMBL/GenBank/DDBJ databases">
        <title>Complete sequence of Dehalococcoides sp. BAV1.</title>
        <authorList>
            <consortium name="US DOE Joint Genome Institute"/>
            <person name="Copeland A."/>
            <person name="Lucas S."/>
            <person name="Lapidus A."/>
            <person name="Barry K."/>
            <person name="Detter J.C."/>
            <person name="Glavina del Rio T."/>
            <person name="Hammon N."/>
            <person name="Israni S."/>
            <person name="Pitluck S."/>
            <person name="Lowry S."/>
            <person name="Clum A."/>
            <person name="Schmutz J."/>
            <person name="Larimer F."/>
            <person name="Land M."/>
            <person name="Hauser L."/>
            <person name="Kyrpides N."/>
            <person name="Kim E."/>
            <person name="Ritalahti K.M."/>
            <person name="Loeffler F."/>
            <person name="Richardson P."/>
        </authorList>
    </citation>
    <scope>NUCLEOTIDE SEQUENCE [LARGE SCALE GENOMIC DNA]</scope>
    <source>
        <strain>ATCC BAA-2100 / JCM 16839 / KCTC 5957 / BAV1</strain>
    </source>
</reference>
<feature type="chain" id="PRO_1000079132" description="Enolase">
    <location>
        <begin position="1"/>
        <end position="428"/>
    </location>
</feature>
<feature type="active site" description="Proton donor" evidence="1">
    <location>
        <position position="206"/>
    </location>
</feature>
<feature type="active site" description="Proton acceptor" evidence="1">
    <location>
        <position position="338"/>
    </location>
</feature>
<feature type="binding site" evidence="1">
    <location>
        <position position="164"/>
    </location>
    <ligand>
        <name>(2R)-2-phosphoglycerate</name>
        <dbReference type="ChEBI" id="CHEBI:58289"/>
    </ligand>
</feature>
<feature type="binding site" evidence="1">
    <location>
        <position position="243"/>
    </location>
    <ligand>
        <name>Mg(2+)</name>
        <dbReference type="ChEBI" id="CHEBI:18420"/>
    </ligand>
</feature>
<feature type="binding site" evidence="1">
    <location>
        <position position="286"/>
    </location>
    <ligand>
        <name>Mg(2+)</name>
        <dbReference type="ChEBI" id="CHEBI:18420"/>
    </ligand>
</feature>
<feature type="binding site" evidence="1">
    <location>
        <position position="313"/>
    </location>
    <ligand>
        <name>Mg(2+)</name>
        <dbReference type="ChEBI" id="CHEBI:18420"/>
    </ligand>
</feature>
<feature type="binding site" evidence="1">
    <location>
        <position position="338"/>
    </location>
    <ligand>
        <name>(2R)-2-phosphoglycerate</name>
        <dbReference type="ChEBI" id="CHEBI:58289"/>
    </ligand>
</feature>
<feature type="binding site" evidence="1">
    <location>
        <position position="367"/>
    </location>
    <ligand>
        <name>(2R)-2-phosphoglycerate</name>
        <dbReference type="ChEBI" id="CHEBI:58289"/>
    </ligand>
</feature>
<feature type="binding site" evidence="1">
    <location>
        <position position="368"/>
    </location>
    <ligand>
        <name>(2R)-2-phosphoglycerate</name>
        <dbReference type="ChEBI" id="CHEBI:58289"/>
    </ligand>
</feature>
<feature type="binding site" evidence="1">
    <location>
        <position position="389"/>
    </location>
    <ligand>
        <name>(2R)-2-phosphoglycerate</name>
        <dbReference type="ChEBI" id="CHEBI:58289"/>
    </ligand>
</feature>
<accession>A5FRM5</accession>
<sequence>MSAVVKSIKAREILDSRGNPTVEADVVLSDGSFGRAAVPSGASTGSHEAVELRDGDKSRYNGLGVHKAVANVNTTIASAISGFKASDQQRLDNLLIELDGTPNKAKLGANAMLATSLAVAHAAAASRHMPLYRYLNNSEEYILPVPMFNILNGGKHASNSTDFQEFMVMPVGAKSFAQALQMGTEVYHSLKKVLKGMNQNTTVGDEGGFAPSLPTNKDAVEVILKAIEKAGYRPGEDIFIALDPASSELYQDGKYTLATENKTLSSAEMVDYWCGWVEKYPIISIEDGLFEDDWDGWKLLTRKIGNKVQLVGDDFYVTNIKRLDRGIKEKASNSILIKLNQIGTLSETIAAIKMANNAGWTAVVSHRSGETEDTTIADLAVAMNAGQIKTGAPCRSERTAKYNRLLRIEEELGGKAKYPGKDAFLNLK</sequence>